<gene>
    <name type="ordered locus">At5g55565</name>
    <name type="ORF">MDF20</name>
</gene>
<reference key="1">
    <citation type="journal article" date="1998" name="DNA Res.">
        <title>Structural analysis of Arabidopsis thaliana chromosome 5. IV. Sequence features of the regions of 1,456,315 bp covered by nineteen physically assigned P1 and TAC clones.</title>
        <authorList>
            <person name="Sato S."/>
            <person name="Kaneko T."/>
            <person name="Kotani H."/>
            <person name="Nakamura Y."/>
            <person name="Asamizu E."/>
            <person name="Miyajima N."/>
            <person name="Tabata S."/>
        </authorList>
    </citation>
    <scope>NUCLEOTIDE SEQUENCE [LARGE SCALE GENOMIC DNA]</scope>
    <source>
        <strain>cv. Columbia</strain>
    </source>
</reference>
<reference key="2">
    <citation type="journal article" date="2017" name="Plant J.">
        <title>Araport11: a complete reannotation of the Arabidopsis thaliana reference genome.</title>
        <authorList>
            <person name="Cheng C.Y."/>
            <person name="Krishnakumar V."/>
            <person name="Chan A.P."/>
            <person name="Thibaud-Nissen F."/>
            <person name="Schobel S."/>
            <person name="Town C.D."/>
        </authorList>
    </citation>
    <scope>GENOME REANNOTATION</scope>
    <source>
        <strain>cv. Columbia</strain>
    </source>
</reference>
<reference key="3">
    <citation type="submission" date="2006-06" db="EMBL/GenBank/DDBJ databases">
        <title>Arabidopsis ORF clones.</title>
        <authorList>
            <person name="Shinn P."/>
            <person name="Chen H."/>
            <person name="Kim C.J."/>
            <person name="Quinitio C."/>
            <person name="Ecker J.R."/>
        </authorList>
    </citation>
    <scope>NUCLEOTIDE SEQUENCE [LARGE SCALE MRNA]</scope>
    <source>
        <strain>cv. Columbia</strain>
    </source>
</reference>
<reference key="4">
    <citation type="submission" date="2002-03" db="EMBL/GenBank/DDBJ databases">
        <title>Full-length cDNA from Arabidopsis thaliana.</title>
        <authorList>
            <person name="Brover V.V."/>
            <person name="Troukhan M.E."/>
            <person name="Alexandrov N.A."/>
            <person name="Lu Y.-P."/>
            <person name="Flavell R.B."/>
            <person name="Feldmann K.A."/>
        </authorList>
    </citation>
    <scope>NUCLEOTIDE SEQUENCE [LARGE SCALE MRNA]</scope>
</reference>
<reference key="5">
    <citation type="journal article" date="2005" name="Plant Physiol.">
        <title>Genome organization of more than 300 defensin-like genes in Arabidopsis.</title>
        <authorList>
            <person name="Silverstein K.A.T."/>
            <person name="Graham M.A."/>
            <person name="Paape T.D."/>
            <person name="VandenBosch K.A."/>
        </authorList>
    </citation>
    <scope>GENE FAMILY</scope>
</reference>
<sequence length="64" mass="7024">MTQGKRKHPCDLKNPSKRAPPATCNKPNGAILCGDFCLHEGYNIGKCVMRRTGKACICSQCEGW</sequence>
<feature type="chain" id="PRO_0000379623" description="Defensin-like protein 41">
    <location>
        <begin position="1"/>
        <end position="64"/>
    </location>
</feature>
<feature type="region of interest" description="Disordered" evidence="2">
    <location>
        <begin position="1"/>
        <end position="21"/>
    </location>
</feature>
<feature type="disulfide bond" evidence="1">
    <location>
        <begin position="10"/>
        <end position="61"/>
    </location>
</feature>
<feature type="disulfide bond" evidence="1">
    <location>
        <begin position="24"/>
        <end position="47"/>
    </location>
</feature>
<feature type="disulfide bond" evidence="1">
    <location>
        <begin position="33"/>
        <end position="56"/>
    </location>
</feature>
<feature type="disulfide bond" evidence="1">
    <location>
        <begin position="37"/>
        <end position="58"/>
    </location>
</feature>
<accession>Q3E8B0</accession>
<dbReference type="EMBL" id="AB009050">
    <property type="status" value="NOT_ANNOTATED_CDS"/>
    <property type="molecule type" value="Genomic_DNA"/>
</dbReference>
<dbReference type="EMBL" id="CP002688">
    <property type="protein sequence ID" value="AED96650.1"/>
    <property type="molecule type" value="Genomic_DNA"/>
</dbReference>
<dbReference type="EMBL" id="BT025633">
    <property type="protein sequence ID" value="ABF74694.1"/>
    <property type="molecule type" value="mRNA"/>
</dbReference>
<dbReference type="EMBL" id="AY089016">
    <property type="status" value="NOT_ANNOTATED_CDS"/>
    <property type="molecule type" value="mRNA"/>
</dbReference>
<dbReference type="RefSeq" id="NP_974938.1">
    <property type="nucleotide sequence ID" value="NM_203209.1"/>
</dbReference>
<dbReference type="SMR" id="Q3E8B0"/>
<dbReference type="PaxDb" id="3702-AT5G55565.1"/>
<dbReference type="EnsemblPlants" id="AT5G55565.1">
    <property type="protein sequence ID" value="AT5G55565.1"/>
    <property type="gene ID" value="AT5G55565"/>
</dbReference>
<dbReference type="GeneID" id="2746214"/>
<dbReference type="Gramene" id="AT5G55565.1">
    <property type="protein sequence ID" value="AT5G55565.1"/>
    <property type="gene ID" value="AT5G55565"/>
</dbReference>
<dbReference type="KEGG" id="ath:AT5G55565"/>
<dbReference type="Araport" id="AT5G55565"/>
<dbReference type="TAIR" id="AT5G55565"/>
<dbReference type="HOGENOM" id="CLU_2870667_0_0_1"/>
<dbReference type="InParanoid" id="Q3E8B0"/>
<dbReference type="OMA" id="CICSQCE"/>
<dbReference type="Proteomes" id="UP000006548">
    <property type="component" value="Chromosome 5"/>
</dbReference>
<dbReference type="ExpressionAtlas" id="Q3E8B0">
    <property type="expression patterns" value="baseline"/>
</dbReference>
<dbReference type="GO" id="GO:0050832">
    <property type="term" value="P:defense response to fungus"/>
    <property type="evidence" value="ECO:0007669"/>
    <property type="project" value="UniProtKB-KW"/>
</dbReference>
<dbReference type="GO" id="GO:0031640">
    <property type="term" value="P:killing of cells of another organism"/>
    <property type="evidence" value="ECO:0007669"/>
    <property type="project" value="UniProtKB-KW"/>
</dbReference>
<evidence type="ECO:0000250" key="1"/>
<evidence type="ECO:0000256" key="2">
    <source>
        <dbReference type="SAM" id="MobiDB-lite"/>
    </source>
</evidence>
<evidence type="ECO:0000305" key="3"/>
<protein>
    <recommendedName>
        <fullName>Defensin-like protein 41</fullName>
    </recommendedName>
</protein>
<organism>
    <name type="scientific">Arabidopsis thaliana</name>
    <name type="common">Mouse-ear cress</name>
    <dbReference type="NCBI Taxonomy" id="3702"/>
    <lineage>
        <taxon>Eukaryota</taxon>
        <taxon>Viridiplantae</taxon>
        <taxon>Streptophyta</taxon>
        <taxon>Embryophyta</taxon>
        <taxon>Tracheophyta</taxon>
        <taxon>Spermatophyta</taxon>
        <taxon>Magnoliopsida</taxon>
        <taxon>eudicotyledons</taxon>
        <taxon>Gunneridae</taxon>
        <taxon>Pentapetalae</taxon>
        <taxon>rosids</taxon>
        <taxon>malvids</taxon>
        <taxon>Brassicales</taxon>
        <taxon>Brassicaceae</taxon>
        <taxon>Camelineae</taxon>
        <taxon>Arabidopsis</taxon>
    </lineage>
</organism>
<keyword id="KW-0929">Antimicrobial</keyword>
<keyword id="KW-1015">Disulfide bond</keyword>
<keyword id="KW-0295">Fungicide</keyword>
<keyword id="KW-0611">Plant defense</keyword>
<keyword id="KW-1185">Reference proteome</keyword>
<comment type="similarity">
    <text evidence="3">Belongs to the DEFL family.</text>
</comment>
<comment type="caution">
    <text evidence="3">Could be the product of a pseudogene. Lacks the signal peptide, which is a conserved feature of the family.</text>
</comment>
<proteinExistence type="uncertain"/>
<name>DEF41_ARATH</name>